<sequence length="329" mass="37304">MASQLTDAFARKFYYLRLSITDVCNFRCTYCLPDGYKPSGVTNKGFLTVDEIRRVTRAFASLGTEKVRLTGGEPSLRRDFTDIIAAVRENDAIRQIAVTTNGYRLERDVANWRDAGLTGINVSVDSLDARQFHAITGQDKFNQVMAGIDAAFEAGFEKVKVNTVLMRDVNHHQLDTFLNWIQHRPIQLRFIELMETGEGSELFRKHHISGQVLRDELLRRGWIHQLRQRSDGPAQVFCHPDYAGEIGLIMPYEKDFCATCNRLRVSSIGKLHLCLFGEGGVNLRDLLEDDTQQQALEARISAALREKKQTHFLHQNNTGITQNLSYIGG</sequence>
<dbReference type="EC" id="4.1.99.22" evidence="1"/>
<dbReference type="EMBL" id="CU928145">
    <property type="protein sequence ID" value="CAU96690.1"/>
    <property type="molecule type" value="Genomic_DNA"/>
</dbReference>
<dbReference type="RefSeq" id="WP_001295301.1">
    <property type="nucleotide sequence ID" value="NC_011748.1"/>
</dbReference>
<dbReference type="SMR" id="B7LC63"/>
<dbReference type="GeneID" id="86863291"/>
<dbReference type="KEGG" id="eck:EC55989_0824"/>
<dbReference type="HOGENOM" id="CLU_009273_0_1_6"/>
<dbReference type="UniPathway" id="UPA00344"/>
<dbReference type="Proteomes" id="UP000000746">
    <property type="component" value="Chromosome"/>
</dbReference>
<dbReference type="GO" id="GO:0051539">
    <property type="term" value="F:4 iron, 4 sulfur cluster binding"/>
    <property type="evidence" value="ECO:0007669"/>
    <property type="project" value="UniProtKB-UniRule"/>
</dbReference>
<dbReference type="GO" id="GO:0061799">
    <property type="term" value="F:cyclic pyranopterin monophosphate synthase activity"/>
    <property type="evidence" value="ECO:0007669"/>
    <property type="project" value="TreeGrafter"/>
</dbReference>
<dbReference type="GO" id="GO:0061798">
    <property type="term" value="F:GTP 3',8'-cyclase activity"/>
    <property type="evidence" value="ECO:0007669"/>
    <property type="project" value="UniProtKB-UniRule"/>
</dbReference>
<dbReference type="GO" id="GO:0005525">
    <property type="term" value="F:GTP binding"/>
    <property type="evidence" value="ECO:0007669"/>
    <property type="project" value="UniProtKB-UniRule"/>
</dbReference>
<dbReference type="GO" id="GO:0046872">
    <property type="term" value="F:metal ion binding"/>
    <property type="evidence" value="ECO:0007669"/>
    <property type="project" value="UniProtKB-KW"/>
</dbReference>
<dbReference type="GO" id="GO:1904047">
    <property type="term" value="F:S-adenosyl-L-methionine binding"/>
    <property type="evidence" value="ECO:0007669"/>
    <property type="project" value="UniProtKB-UniRule"/>
</dbReference>
<dbReference type="GO" id="GO:0006777">
    <property type="term" value="P:Mo-molybdopterin cofactor biosynthetic process"/>
    <property type="evidence" value="ECO:0007669"/>
    <property type="project" value="UniProtKB-UniRule"/>
</dbReference>
<dbReference type="CDD" id="cd01335">
    <property type="entry name" value="Radical_SAM"/>
    <property type="match status" value="1"/>
</dbReference>
<dbReference type="CDD" id="cd21117">
    <property type="entry name" value="Twitch_MoaA"/>
    <property type="match status" value="1"/>
</dbReference>
<dbReference type="FunFam" id="3.20.20.70:FF:000057">
    <property type="entry name" value="GTP 3',8-cyclase"/>
    <property type="match status" value="1"/>
</dbReference>
<dbReference type="Gene3D" id="3.20.20.70">
    <property type="entry name" value="Aldolase class I"/>
    <property type="match status" value="1"/>
</dbReference>
<dbReference type="HAMAP" id="MF_01225_B">
    <property type="entry name" value="MoaA_B"/>
    <property type="match status" value="1"/>
</dbReference>
<dbReference type="InterPro" id="IPR013785">
    <property type="entry name" value="Aldolase_TIM"/>
</dbReference>
<dbReference type="InterPro" id="IPR006638">
    <property type="entry name" value="Elp3/MiaA/NifB-like_rSAM"/>
</dbReference>
<dbReference type="InterPro" id="IPR013483">
    <property type="entry name" value="MoaA"/>
</dbReference>
<dbReference type="InterPro" id="IPR000385">
    <property type="entry name" value="MoaA_NifB_PqqE_Fe-S-bd_CS"/>
</dbReference>
<dbReference type="InterPro" id="IPR010505">
    <property type="entry name" value="MoaA_twitch"/>
</dbReference>
<dbReference type="InterPro" id="IPR050105">
    <property type="entry name" value="MoCo_biosynth_MoaA/MoaC"/>
</dbReference>
<dbReference type="InterPro" id="IPR007197">
    <property type="entry name" value="rSAM"/>
</dbReference>
<dbReference type="NCBIfam" id="TIGR02666">
    <property type="entry name" value="moaA"/>
    <property type="match status" value="1"/>
</dbReference>
<dbReference type="PANTHER" id="PTHR22960:SF28">
    <property type="entry name" value="GTP 3',8-CYCLASE"/>
    <property type="match status" value="1"/>
</dbReference>
<dbReference type="PANTHER" id="PTHR22960">
    <property type="entry name" value="MOLYBDOPTERIN COFACTOR SYNTHESIS PROTEIN A"/>
    <property type="match status" value="1"/>
</dbReference>
<dbReference type="Pfam" id="PF13353">
    <property type="entry name" value="Fer4_12"/>
    <property type="match status" value="1"/>
</dbReference>
<dbReference type="Pfam" id="PF06463">
    <property type="entry name" value="Mob_synth_C"/>
    <property type="match status" value="1"/>
</dbReference>
<dbReference type="Pfam" id="PF04055">
    <property type="entry name" value="Radical_SAM"/>
    <property type="match status" value="1"/>
</dbReference>
<dbReference type="SFLD" id="SFLDG01383">
    <property type="entry name" value="cyclic_pyranopterin_phosphate"/>
    <property type="match status" value="1"/>
</dbReference>
<dbReference type="SFLD" id="SFLDG01072">
    <property type="entry name" value="dehydrogenase_like"/>
    <property type="match status" value="1"/>
</dbReference>
<dbReference type="SMART" id="SM00729">
    <property type="entry name" value="Elp3"/>
    <property type="match status" value="1"/>
</dbReference>
<dbReference type="SUPFAM" id="SSF102114">
    <property type="entry name" value="Radical SAM enzymes"/>
    <property type="match status" value="1"/>
</dbReference>
<dbReference type="PROSITE" id="PS01305">
    <property type="entry name" value="MOAA_NIFB_PQQE"/>
    <property type="match status" value="1"/>
</dbReference>
<dbReference type="PROSITE" id="PS51918">
    <property type="entry name" value="RADICAL_SAM"/>
    <property type="match status" value="1"/>
</dbReference>
<proteinExistence type="inferred from homology"/>
<accession>B7LC63</accession>
<gene>
    <name evidence="1" type="primary">moaA</name>
    <name type="ordered locus">EC55989_0824</name>
</gene>
<comment type="function">
    <text evidence="1">Catalyzes the cyclization of GTP to (8S)-3',8-cyclo-7,8-dihydroguanosine 5'-triphosphate.</text>
</comment>
<comment type="catalytic activity">
    <reaction evidence="1">
        <text>GTP + AH2 + S-adenosyl-L-methionine = (8S)-3',8-cyclo-7,8-dihydroguanosine 5'-triphosphate + 5'-deoxyadenosine + L-methionine + A + H(+)</text>
        <dbReference type="Rhea" id="RHEA:49576"/>
        <dbReference type="ChEBI" id="CHEBI:13193"/>
        <dbReference type="ChEBI" id="CHEBI:15378"/>
        <dbReference type="ChEBI" id="CHEBI:17319"/>
        <dbReference type="ChEBI" id="CHEBI:17499"/>
        <dbReference type="ChEBI" id="CHEBI:37565"/>
        <dbReference type="ChEBI" id="CHEBI:57844"/>
        <dbReference type="ChEBI" id="CHEBI:59789"/>
        <dbReference type="ChEBI" id="CHEBI:131766"/>
        <dbReference type="EC" id="4.1.99.22"/>
    </reaction>
</comment>
<comment type="cofactor">
    <cofactor evidence="1">
        <name>[4Fe-4S] cluster</name>
        <dbReference type="ChEBI" id="CHEBI:49883"/>
    </cofactor>
    <text evidence="1">Binds 2 [4Fe-4S] clusters. Binds 1 [4Fe-4S] cluster coordinated with 3 cysteines and an exchangeable S-adenosyl-L-methionine and 1 [4Fe-4S] cluster coordinated with 3 cysteines and the GTP-derived substrate.</text>
</comment>
<comment type="pathway">
    <text evidence="1">Cofactor biosynthesis; molybdopterin biosynthesis.</text>
</comment>
<comment type="subunit">
    <text evidence="1">Monomer and homodimer.</text>
</comment>
<comment type="similarity">
    <text evidence="1">Belongs to the radical SAM superfamily. MoaA family.</text>
</comment>
<protein>
    <recommendedName>
        <fullName evidence="1">GTP 3',8-cyclase</fullName>
        <ecNumber evidence="1">4.1.99.22</ecNumber>
    </recommendedName>
    <alternativeName>
        <fullName evidence="1">Molybdenum cofactor biosynthesis protein A</fullName>
    </alternativeName>
</protein>
<reference key="1">
    <citation type="journal article" date="2009" name="PLoS Genet.">
        <title>Organised genome dynamics in the Escherichia coli species results in highly diverse adaptive paths.</title>
        <authorList>
            <person name="Touchon M."/>
            <person name="Hoede C."/>
            <person name="Tenaillon O."/>
            <person name="Barbe V."/>
            <person name="Baeriswyl S."/>
            <person name="Bidet P."/>
            <person name="Bingen E."/>
            <person name="Bonacorsi S."/>
            <person name="Bouchier C."/>
            <person name="Bouvet O."/>
            <person name="Calteau A."/>
            <person name="Chiapello H."/>
            <person name="Clermont O."/>
            <person name="Cruveiller S."/>
            <person name="Danchin A."/>
            <person name="Diard M."/>
            <person name="Dossat C."/>
            <person name="Karoui M.E."/>
            <person name="Frapy E."/>
            <person name="Garry L."/>
            <person name="Ghigo J.M."/>
            <person name="Gilles A.M."/>
            <person name="Johnson J."/>
            <person name="Le Bouguenec C."/>
            <person name="Lescat M."/>
            <person name="Mangenot S."/>
            <person name="Martinez-Jehanne V."/>
            <person name="Matic I."/>
            <person name="Nassif X."/>
            <person name="Oztas S."/>
            <person name="Petit M.A."/>
            <person name="Pichon C."/>
            <person name="Rouy Z."/>
            <person name="Ruf C.S."/>
            <person name="Schneider D."/>
            <person name="Tourret J."/>
            <person name="Vacherie B."/>
            <person name="Vallenet D."/>
            <person name="Medigue C."/>
            <person name="Rocha E.P.C."/>
            <person name="Denamur E."/>
        </authorList>
    </citation>
    <scope>NUCLEOTIDE SEQUENCE [LARGE SCALE GENOMIC DNA]</scope>
    <source>
        <strain>55989 / EAEC</strain>
    </source>
</reference>
<evidence type="ECO:0000255" key="1">
    <source>
        <dbReference type="HAMAP-Rule" id="MF_01225"/>
    </source>
</evidence>
<evidence type="ECO:0000255" key="2">
    <source>
        <dbReference type="PROSITE-ProRule" id="PRU01266"/>
    </source>
</evidence>
<name>MOAA_ECO55</name>
<organism>
    <name type="scientific">Escherichia coli (strain 55989 / EAEC)</name>
    <dbReference type="NCBI Taxonomy" id="585055"/>
    <lineage>
        <taxon>Bacteria</taxon>
        <taxon>Pseudomonadati</taxon>
        <taxon>Pseudomonadota</taxon>
        <taxon>Gammaproteobacteria</taxon>
        <taxon>Enterobacterales</taxon>
        <taxon>Enterobacteriaceae</taxon>
        <taxon>Escherichia</taxon>
    </lineage>
</organism>
<keyword id="KW-0004">4Fe-4S</keyword>
<keyword id="KW-0342">GTP-binding</keyword>
<keyword id="KW-0408">Iron</keyword>
<keyword id="KW-0411">Iron-sulfur</keyword>
<keyword id="KW-0456">Lyase</keyword>
<keyword id="KW-0479">Metal-binding</keyword>
<keyword id="KW-0501">Molybdenum cofactor biosynthesis</keyword>
<keyword id="KW-0547">Nucleotide-binding</keyword>
<keyword id="KW-1185">Reference proteome</keyword>
<keyword id="KW-0949">S-adenosyl-L-methionine</keyword>
<feature type="chain" id="PRO_1000164915" description="GTP 3',8-cyclase">
    <location>
        <begin position="1"/>
        <end position="329"/>
    </location>
</feature>
<feature type="domain" description="Radical SAM core" evidence="2">
    <location>
        <begin position="8"/>
        <end position="234"/>
    </location>
</feature>
<feature type="binding site" evidence="1">
    <location>
        <position position="17"/>
    </location>
    <ligand>
        <name>GTP</name>
        <dbReference type="ChEBI" id="CHEBI:37565"/>
    </ligand>
</feature>
<feature type="binding site" evidence="1">
    <location>
        <position position="24"/>
    </location>
    <ligand>
        <name>[4Fe-4S] cluster</name>
        <dbReference type="ChEBI" id="CHEBI:49883"/>
        <label>1</label>
        <note>4Fe-4S-S-AdoMet</note>
    </ligand>
</feature>
<feature type="binding site" evidence="1">
    <location>
        <position position="28"/>
    </location>
    <ligand>
        <name>[4Fe-4S] cluster</name>
        <dbReference type="ChEBI" id="CHEBI:49883"/>
        <label>1</label>
        <note>4Fe-4S-S-AdoMet</note>
    </ligand>
</feature>
<feature type="binding site" evidence="1">
    <location>
        <position position="30"/>
    </location>
    <ligand>
        <name>S-adenosyl-L-methionine</name>
        <dbReference type="ChEBI" id="CHEBI:59789"/>
    </ligand>
</feature>
<feature type="binding site" evidence="1">
    <location>
        <position position="31"/>
    </location>
    <ligand>
        <name>[4Fe-4S] cluster</name>
        <dbReference type="ChEBI" id="CHEBI:49883"/>
        <label>1</label>
        <note>4Fe-4S-S-AdoMet</note>
    </ligand>
</feature>
<feature type="binding site" evidence="1">
    <location>
        <position position="68"/>
    </location>
    <ligand>
        <name>GTP</name>
        <dbReference type="ChEBI" id="CHEBI:37565"/>
    </ligand>
</feature>
<feature type="binding site" evidence="1">
    <location>
        <position position="72"/>
    </location>
    <ligand>
        <name>S-adenosyl-L-methionine</name>
        <dbReference type="ChEBI" id="CHEBI:59789"/>
    </ligand>
</feature>
<feature type="binding site" evidence="1">
    <location>
        <position position="99"/>
    </location>
    <ligand>
        <name>GTP</name>
        <dbReference type="ChEBI" id="CHEBI:37565"/>
    </ligand>
</feature>
<feature type="binding site" evidence="1">
    <location>
        <position position="123"/>
    </location>
    <ligand>
        <name>S-adenosyl-L-methionine</name>
        <dbReference type="ChEBI" id="CHEBI:59789"/>
    </ligand>
</feature>
<feature type="binding site" evidence="1">
    <location>
        <position position="160"/>
    </location>
    <ligand>
        <name>GTP</name>
        <dbReference type="ChEBI" id="CHEBI:37565"/>
    </ligand>
</feature>
<feature type="binding site" evidence="1">
    <location>
        <position position="194"/>
    </location>
    <ligand>
        <name>S-adenosyl-L-methionine</name>
        <dbReference type="ChEBI" id="CHEBI:59789"/>
    </ligand>
</feature>
<feature type="binding site" evidence="1">
    <location>
        <position position="257"/>
    </location>
    <ligand>
        <name>[4Fe-4S] cluster</name>
        <dbReference type="ChEBI" id="CHEBI:49883"/>
        <label>2</label>
        <note>4Fe-4S-substrate</note>
    </ligand>
</feature>
<feature type="binding site" evidence="1">
    <location>
        <position position="260"/>
    </location>
    <ligand>
        <name>[4Fe-4S] cluster</name>
        <dbReference type="ChEBI" id="CHEBI:49883"/>
        <label>2</label>
        <note>4Fe-4S-substrate</note>
    </ligand>
</feature>
<feature type="binding site" evidence="1">
    <location>
        <begin position="262"/>
        <end position="264"/>
    </location>
    <ligand>
        <name>GTP</name>
        <dbReference type="ChEBI" id="CHEBI:37565"/>
    </ligand>
</feature>
<feature type="binding site" evidence="1">
    <location>
        <position position="274"/>
    </location>
    <ligand>
        <name>[4Fe-4S] cluster</name>
        <dbReference type="ChEBI" id="CHEBI:49883"/>
        <label>2</label>
        <note>4Fe-4S-substrate</note>
    </ligand>
</feature>